<organism>
    <name type="scientific">Archaeoglobus fulgidus (strain ATCC 49558 / DSM 4304 / JCM 9628 / NBRC 100126 / VC-16)</name>
    <dbReference type="NCBI Taxonomy" id="224325"/>
    <lineage>
        <taxon>Archaea</taxon>
        <taxon>Methanobacteriati</taxon>
        <taxon>Methanobacteriota</taxon>
        <taxon>Archaeoglobi</taxon>
        <taxon>Archaeoglobales</taxon>
        <taxon>Archaeoglobaceae</taxon>
        <taxon>Archaeoglobus</taxon>
    </lineage>
</organism>
<reference key="1">
    <citation type="journal article" date="1997" name="Nature">
        <title>The complete genome sequence of the hyperthermophilic, sulphate-reducing archaeon Archaeoglobus fulgidus.</title>
        <authorList>
            <person name="Klenk H.-P."/>
            <person name="Clayton R.A."/>
            <person name="Tomb J.-F."/>
            <person name="White O."/>
            <person name="Nelson K.E."/>
            <person name="Ketchum K.A."/>
            <person name="Dodson R.J."/>
            <person name="Gwinn M.L."/>
            <person name="Hickey E.K."/>
            <person name="Peterson J.D."/>
            <person name="Richardson D.L."/>
            <person name="Kerlavage A.R."/>
            <person name="Graham D.E."/>
            <person name="Kyrpides N.C."/>
            <person name="Fleischmann R.D."/>
            <person name="Quackenbush J."/>
            <person name="Lee N.H."/>
            <person name="Sutton G.G."/>
            <person name="Gill S.R."/>
            <person name="Kirkness E.F."/>
            <person name="Dougherty B.A."/>
            <person name="McKenney K."/>
            <person name="Adams M.D."/>
            <person name="Loftus B.J."/>
            <person name="Peterson S.N."/>
            <person name="Reich C.I."/>
            <person name="McNeil L.K."/>
            <person name="Badger J.H."/>
            <person name="Glodek A."/>
            <person name="Zhou L."/>
            <person name="Overbeek R."/>
            <person name="Gocayne J.D."/>
            <person name="Weidman J.F."/>
            <person name="McDonald L.A."/>
            <person name="Utterback T.R."/>
            <person name="Cotton M.D."/>
            <person name="Spriggs T."/>
            <person name="Artiach P."/>
            <person name="Kaine B.P."/>
            <person name="Sykes S.M."/>
            <person name="Sadow P.W."/>
            <person name="D'Andrea K.P."/>
            <person name="Bowman C."/>
            <person name="Fujii C."/>
            <person name="Garland S.A."/>
            <person name="Mason T.M."/>
            <person name="Olsen G.J."/>
            <person name="Fraser C.M."/>
            <person name="Smith H.O."/>
            <person name="Woese C.R."/>
            <person name="Venter J.C."/>
        </authorList>
    </citation>
    <scope>NUCLEOTIDE SEQUENCE [LARGE SCALE GENOMIC DNA]</scope>
    <source>
        <strain>ATCC 49558 / DSM 4304 / JCM 9628 / NBRC 100126 / VC-16</strain>
    </source>
</reference>
<keyword id="KW-0002">3D-structure</keyword>
<keyword id="KW-0175">Coiled coil</keyword>
<keyword id="KW-1185">Reference proteome</keyword>
<accession>O30176</accession>
<evidence type="ECO:0000255" key="1"/>
<evidence type="ECO:0007829" key="2">
    <source>
        <dbReference type="PDB" id="2P06"/>
    </source>
</evidence>
<proteinExistence type="evidence at protein level"/>
<protein>
    <recommendedName>
        <fullName>Uncharacterized protein AF_0060</fullName>
    </recommendedName>
</protein>
<feature type="chain" id="PRO_0000127818" description="Uncharacterized protein AF_0060">
    <location>
        <begin position="1"/>
        <end position="93"/>
    </location>
</feature>
<feature type="coiled-coil region" evidence="1">
    <location>
        <begin position="36"/>
        <end position="69"/>
    </location>
</feature>
<feature type="helix" evidence="2">
    <location>
        <begin position="3"/>
        <end position="22"/>
    </location>
</feature>
<feature type="helix" evidence="2">
    <location>
        <begin position="31"/>
        <end position="34"/>
    </location>
</feature>
<feature type="helix" evidence="2">
    <location>
        <begin position="37"/>
        <end position="56"/>
    </location>
</feature>
<feature type="helix" evidence="2">
    <location>
        <begin position="60"/>
        <end position="83"/>
    </location>
</feature>
<gene>
    <name type="ordered locus">AF_0060</name>
</gene>
<dbReference type="EMBL" id="AE000782">
    <property type="protein sequence ID" value="AAB91172.1"/>
    <property type="molecule type" value="Genomic_DNA"/>
</dbReference>
<dbReference type="PIR" id="D69257">
    <property type="entry name" value="D69257"/>
</dbReference>
<dbReference type="RefSeq" id="WP_010877574.1">
    <property type="nucleotide sequence ID" value="NC_000917.1"/>
</dbReference>
<dbReference type="PDB" id="2P06">
    <property type="method" value="X-ray"/>
    <property type="resolution" value="2.10 A"/>
    <property type="chains" value="A/B=1-93"/>
</dbReference>
<dbReference type="PDBsum" id="2P06"/>
<dbReference type="SMR" id="O30176"/>
<dbReference type="STRING" id="224325.AF_0060"/>
<dbReference type="PaxDb" id="224325-AF_0060"/>
<dbReference type="EnsemblBacteria" id="AAB91172">
    <property type="protein sequence ID" value="AAB91172"/>
    <property type="gene ID" value="AF_0060"/>
</dbReference>
<dbReference type="KEGG" id="afu:AF_0060"/>
<dbReference type="HOGENOM" id="CLU_2392720_0_0_2"/>
<dbReference type="EvolutionaryTrace" id="O30176"/>
<dbReference type="Proteomes" id="UP000002199">
    <property type="component" value="Chromosome"/>
</dbReference>
<dbReference type="CDD" id="cd11533">
    <property type="entry name" value="NTP-PPase_Af0060_like"/>
    <property type="match status" value="1"/>
</dbReference>
<dbReference type="Gene3D" id="1.10.287.1080">
    <property type="entry name" value="MazG-like"/>
    <property type="match status" value="1"/>
</dbReference>
<dbReference type="InterPro" id="IPR044548">
    <property type="entry name" value="AF0060_NTP-PPase_MazG-like"/>
</dbReference>
<dbReference type="InterPro" id="IPR004518">
    <property type="entry name" value="MazG-like_dom"/>
</dbReference>
<dbReference type="Pfam" id="PF03819">
    <property type="entry name" value="MazG"/>
    <property type="match status" value="1"/>
</dbReference>
<dbReference type="SUPFAM" id="SSF101386">
    <property type="entry name" value="all-alpha NTP pyrophosphatases"/>
    <property type="match status" value="1"/>
</dbReference>
<sequence length="93" mass="11460">MDYFRLAEKFLREMHAKYMKRVSRPGNTPRPWFDFSEERLLSRLFEEMDELREAVEKEDWENLRDELLDVANFCMYLWGKLSVKNIYDKGEEQ</sequence>
<name>Y060_ARCFU</name>